<feature type="chain" id="PRO_0000288519" description="ATP synthase epsilon chain, chloroplastic">
    <location>
        <begin position="1"/>
        <end position="137"/>
    </location>
</feature>
<feature type="sequence conflict" description="In Ref. 2; BAA00335." evidence="2" ref="2">
    <original>D</original>
    <variation>A</variation>
    <location>
        <position position="16"/>
    </location>
</feature>
<gene>
    <name evidence="1" type="primary">atpE</name>
    <name type="ORF">Nip060</name>
</gene>
<organism>
    <name type="scientific">Oryza sativa subsp. japonica</name>
    <name type="common">Rice</name>
    <dbReference type="NCBI Taxonomy" id="39947"/>
    <lineage>
        <taxon>Eukaryota</taxon>
        <taxon>Viridiplantae</taxon>
        <taxon>Streptophyta</taxon>
        <taxon>Embryophyta</taxon>
        <taxon>Tracheophyta</taxon>
        <taxon>Spermatophyta</taxon>
        <taxon>Magnoliopsida</taxon>
        <taxon>Liliopsida</taxon>
        <taxon>Poales</taxon>
        <taxon>Poaceae</taxon>
        <taxon>BOP clade</taxon>
        <taxon>Oryzoideae</taxon>
        <taxon>Oryzeae</taxon>
        <taxon>Oryzinae</taxon>
        <taxon>Oryza</taxon>
        <taxon>Oryza sativa</taxon>
    </lineage>
</organism>
<dbReference type="EMBL" id="M31464">
    <property type="protein sequence ID" value="AAA84589.1"/>
    <property type="molecule type" value="Genomic_DNA"/>
</dbReference>
<dbReference type="EMBL" id="D00432">
    <property type="protein sequence ID" value="BAA00335.1"/>
    <property type="molecule type" value="Genomic_DNA"/>
</dbReference>
<dbReference type="EMBL" id="X15901">
    <property type="protein sequence ID" value="CAA34002.1"/>
    <property type="molecule type" value="Genomic_DNA"/>
</dbReference>
<dbReference type="EMBL" id="AY522330">
    <property type="protein sequence ID" value="AAS46126.1"/>
    <property type="molecule type" value="Genomic_DNA"/>
</dbReference>
<dbReference type="EMBL" id="AP003280">
    <property type="protein sequence ID" value="BAD81970.1"/>
    <property type="molecule type" value="Genomic_DNA"/>
</dbReference>
<dbReference type="EMBL" id="AP003457">
    <property type="protein sequence ID" value="BAD68381.1"/>
    <property type="molecule type" value="Genomic_DNA"/>
</dbReference>
<dbReference type="PIR" id="JQ0229">
    <property type="entry name" value="PWRZE"/>
</dbReference>
<dbReference type="RefSeq" id="NP_039389.1">
    <property type="nucleotide sequence ID" value="NC_001320.1"/>
</dbReference>
<dbReference type="RefSeq" id="YP_009305310.1">
    <property type="nucleotide sequence ID" value="NC_031333.1"/>
</dbReference>
<dbReference type="SMR" id="P0C2Z3"/>
<dbReference type="BioGRID" id="792829">
    <property type="interactions" value="1"/>
</dbReference>
<dbReference type="FunCoup" id="P0C2Z3">
    <property type="interactions" value="321"/>
</dbReference>
<dbReference type="STRING" id="39947.P0C2Z3"/>
<dbReference type="PaxDb" id="39947-P0C2Z3"/>
<dbReference type="GeneID" id="29141376"/>
<dbReference type="GeneID" id="3131461"/>
<dbReference type="KEGG" id="dosa:CAA34002.1"/>
<dbReference type="KEGG" id="osa:3131461"/>
<dbReference type="InParanoid" id="P0C2Z3"/>
<dbReference type="OrthoDB" id="681737at2759"/>
<dbReference type="Proteomes" id="UP000000763">
    <property type="component" value="Chromosome 1"/>
</dbReference>
<dbReference type="Proteomes" id="UP000000763">
    <property type="component" value="Chromosome 6"/>
</dbReference>
<dbReference type="Proteomes" id="UP000059680">
    <property type="component" value="Chloroplast"/>
</dbReference>
<dbReference type="GO" id="GO:0009535">
    <property type="term" value="C:chloroplast thylakoid membrane"/>
    <property type="evidence" value="ECO:0007669"/>
    <property type="project" value="UniProtKB-SubCell"/>
</dbReference>
<dbReference type="GO" id="GO:0009536">
    <property type="term" value="C:plastid"/>
    <property type="evidence" value="ECO:0000305"/>
    <property type="project" value="Gramene"/>
</dbReference>
<dbReference type="GO" id="GO:0045259">
    <property type="term" value="C:proton-transporting ATP synthase complex"/>
    <property type="evidence" value="ECO:0007669"/>
    <property type="project" value="UniProtKB-KW"/>
</dbReference>
<dbReference type="GO" id="GO:0005524">
    <property type="term" value="F:ATP binding"/>
    <property type="evidence" value="ECO:0007669"/>
    <property type="project" value="UniProtKB-UniRule"/>
</dbReference>
<dbReference type="GO" id="GO:0046933">
    <property type="term" value="F:proton-transporting ATP synthase activity, rotational mechanism"/>
    <property type="evidence" value="ECO:0007669"/>
    <property type="project" value="UniProtKB-UniRule"/>
</dbReference>
<dbReference type="GO" id="GO:0015986">
    <property type="term" value="P:proton motive force-driven ATP synthesis"/>
    <property type="evidence" value="ECO:0000318"/>
    <property type="project" value="GO_Central"/>
</dbReference>
<dbReference type="CDD" id="cd12152">
    <property type="entry name" value="F1-ATPase_delta"/>
    <property type="match status" value="1"/>
</dbReference>
<dbReference type="FunFam" id="2.60.15.10:FF:000002">
    <property type="entry name" value="ATP synthase epsilon chain, chloroplastic"/>
    <property type="match status" value="1"/>
</dbReference>
<dbReference type="Gene3D" id="6.10.140.480">
    <property type="match status" value="1"/>
</dbReference>
<dbReference type="Gene3D" id="2.60.15.10">
    <property type="entry name" value="F0F1 ATP synthase delta/epsilon subunit, N-terminal"/>
    <property type="match status" value="1"/>
</dbReference>
<dbReference type="HAMAP" id="MF_00530">
    <property type="entry name" value="ATP_synth_epsil_bac"/>
    <property type="match status" value="1"/>
</dbReference>
<dbReference type="InterPro" id="IPR001469">
    <property type="entry name" value="ATP_synth_F1_dsu/esu"/>
</dbReference>
<dbReference type="InterPro" id="IPR020546">
    <property type="entry name" value="ATP_synth_F1_dsu/esu_N"/>
</dbReference>
<dbReference type="InterPro" id="IPR020547">
    <property type="entry name" value="ATP_synth_F1_esu_C"/>
</dbReference>
<dbReference type="InterPro" id="IPR036771">
    <property type="entry name" value="ATPsynth_dsu/esu_N"/>
</dbReference>
<dbReference type="NCBIfam" id="TIGR01216">
    <property type="entry name" value="ATP_synt_epsi"/>
    <property type="match status" value="1"/>
</dbReference>
<dbReference type="PANTHER" id="PTHR13822">
    <property type="entry name" value="ATP SYNTHASE DELTA/EPSILON CHAIN"/>
    <property type="match status" value="1"/>
</dbReference>
<dbReference type="PANTHER" id="PTHR13822:SF10">
    <property type="entry name" value="ATP SYNTHASE EPSILON CHAIN, CHLOROPLASTIC"/>
    <property type="match status" value="1"/>
</dbReference>
<dbReference type="Pfam" id="PF00401">
    <property type="entry name" value="ATP-synt_DE"/>
    <property type="match status" value="1"/>
</dbReference>
<dbReference type="Pfam" id="PF02823">
    <property type="entry name" value="ATP-synt_DE_N"/>
    <property type="match status" value="1"/>
</dbReference>
<dbReference type="SUPFAM" id="SSF51344">
    <property type="entry name" value="Epsilon subunit of F1F0-ATP synthase N-terminal domain"/>
    <property type="match status" value="1"/>
</dbReference>
<comment type="function">
    <text evidence="1">Produces ATP from ADP in the presence of a proton gradient across the membrane.</text>
</comment>
<comment type="subunit">
    <text evidence="1">F-type ATPases have 2 components, CF(1) - the catalytic core - and CF(0) - the membrane proton channel. CF(1) has five subunits: alpha(3), beta(3), gamma(1), delta(1), epsilon(1). CF(0) has three main subunits: a, b and c.</text>
</comment>
<comment type="subcellular location">
    <subcellularLocation>
        <location evidence="1">Plastid</location>
        <location evidence="1">Chloroplast thylakoid membrane</location>
        <topology evidence="1">Peripheral membrane protein</topology>
    </subcellularLocation>
</comment>
<comment type="miscellaneous">
    <text>A stretch of the chloroplast genome is duplicated within chromosomes 1 and 6, resulting in the duplication of the gene. The expression of these duplicated genes (Os01g0790900 and Os06g0120500 respectively) has not been demonstrated.</text>
</comment>
<comment type="similarity">
    <text evidence="1">Belongs to the ATPase epsilon chain family.</text>
</comment>
<protein>
    <recommendedName>
        <fullName evidence="1">ATP synthase epsilon chain, chloroplastic</fullName>
    </recommendedName>
    <alternativeName>
        <fullName evidence="1">ATP synthase F1 sector epsilon subunit</fullName>
    </alternativeName>
    <alternativeName>
        <fullName evidence="1">F-ATPase epsilon subunit</fullName>
    </alternativeName>
</protein>
<sequence length="137" mass="15218">MKLNLYVLTPKRIIWDCEVKEIILSTNSGQIGVLPNHAPINTAVDMGPLRIRLLNDQWLTAVLWSGFARIVNNEIIILGNDAELGSDIDPEEAQQALEIAEANVSRAEGTKELVEAKVALRRARIRVEAVNWIPPSN</sequence>
<evidence type="ECO:0000255" key="1">
    <source>
        <dbReference type="HAMAP-Rule" id="MF_00530"/>
    </source>
</evidence>
<evidence type="ECO:0000305" key="2"/>
<geneLocation type="chloroplast"/>
<accession>P0C2Z3</accession>
<accession>P12086</accession>
<accession>Q6QY05</accession>
<accession>Q6QY69</accession>
<name>ATPE_ORYSJ</name>
<proteinExistence type="inferred from homology"/>
<reference key="1">
    <citation type="journal article" date="1987" name="Nucleic Acids Res.">
        <title>Sequence of the chloroplast-encoded atpB-atpE-trnM gene clusters from rice.</title>
        <authorList>
            <person name="Moon E."/>
            <person name="Kao T.-H."/>
            <person name="Wu R."/>
        </authorList>
    </citation>
    <scope>NUCLEOTIDE SEQUENCE [GENOMIC DNA]</scope>
</reference>
<reference key="2">
    <citation type="journal article" date="1989" name="Jpn. J. Genet.">
        <title>The nucleotide sequences and expression of genes for the beta and epsilon subunits of ATP synthase from rice (Oryza sativa L.).</title>
        <authorList>
            <person name="Nishizawa Y."/>
            <person name="Hirai A."/>
        </authorList>
    </citation>
    <scope>NUCLEOTIDE SEQUENCE [GENOMIC DNA]</scope>
</reference>
<reference key="3">
    <citation type="journal article" date="1989" name="Mol. Gen. Genet.">
        <title>The complete sequence of the rice (Oryza sativa) chloroplast genome: intermolecular recombination between distinct tRNA genes accounts for a major plastid DNA inversion during the evolution of the cereals.</title>
        <authorList>
            <person name="Hiratsuka J."/>
            <person name="Shimada H."/>
            <person name="Whittier R."/>
            <person name="Ishibashi T."/>
            <person name="Sakamoto M."/>
            <person name="Mori M."/>
            <person name="Kondo C."/>
            <person name="Honji Y."/>
            <person name="Sun C.-R."/>
            <person name="Meng B.-Y."/>
            <person name="Li Y.-Q."/>
            <person name="Kanno A."/>
            <person name="Nishizawa Y."/>
            <person name="Hirai A."/>
            <person name="Shinozaki K."/>
            <person name="Sugiura M."/>
        </authorList>
    </citation>
    <scope>NUCLEOTIDE SEQUENCE [LARGE SCALE GENOMIC DNA]</scope>
    <source>
        <strain>cv. Nipponbare</strain>
    </source>
</reference>
<reference key="4">
    <citation type="journal article" date="2004" name="Plant Physiol.">
        <title>A comparison of rice chloroplast genomes.</title>
        <authorList>
            <person name="Tang J."/>
            <person name="Xia H."/>
            <person name="Cao M."/>
            <person name="Zhang X."/>
            <person name="Zeng W."/>
            <person name="Hu S."/>
            <person name="Tong W."/>
            <person name="Wang J."/>
            <person name="Wang J."/>
            <person name="Yu J."/>
            <person name="Yang H."/>
            <person name="Zhu L."/>
        </authorList>
    </citation>
    <scope>NUCLEOTIDE SEQUENCE [LARGE SCALE GENOMIC DNA]</scope>
    <source>
        <strain>cv. Nipponbare</strain>
    </source>
</reference>
<reference key="5">
    <citation type="journal article" date="2002" name="Nature">
        <title>The genome sequence and structure of rice chromosome 1.</title>
        <authorList>
            <person name="Sasaki T."/>
            <person name="Matsumoto T."/>
            <person name="Yamamoto K."/>
            <person name="Sakata K."/>
            <person name="Baba T."/>
            <person name="Katayose Y."/>
            <person name="Wu J."/>
            <person name="Niimura Y."/>
            <person name="Cheng Z."/>
            <person name="Nagamura Y."/>
            <person name="Antonio B.A."/>
            <person name="Kanamori H."/>
            <person name="Hosokawa S."/>
            <person name="Masukawa M."/>
            <person name="Arikawa K."/>
            <person name="Chiden Y."/>
            <person name="Hayashi M."/>
            <person name="Okamoto M."/>
            <person name="Ando T."/>
            <person name="Aoki H."/>
            <person name="Arita K."/>
            <person name="Hamada M."/>
            <person name="Harada C."/>
            <person name="Hijishita S."/>
            <person name="Honda M."/>
            <person name="Ichikawa Y."/>
            <person name="Idonuma A."/>
            <person name="Iijima M."/>
            <person name="Ikeda M."/>
            <person name="Ikeno M."/>
            <person name="Ito S."/>
            <person name="Ito T."/>
            <person name="Ito Y."/>
            <person name="Ito Y."/>
            <person name="Iwabuchi A."/>
            <person name="Kamiya K."/>
            <person name="Karasawa W."/>
            <person name="Katagiri S."/>
            <person name="Kikuta A."/>
            <person name="Kobayashi N."/>
            <person name="Kono I."/>
            <person name="Machita K."/>
            <person name="Maehara T."/>
            <person name="Mizuno H."/>
            <person name="Mizubayashi T."/>
            <person name="Mukai Y."/>
            <person name="Nagasaki H."/>
            <person name="Nakashima M."/>
            <person name="Nakama Y."/>
            <person name="Nakamichi Y."/>
            <person name="Nakamura M."/>
            <person name="Namiki N."/>
            <person name="Negishi M."/>
            <person name="Ohta I."/>
            <person name="Ono N."/>
            <person name="Saji S."/>
            <person name="Sakai K."/>
            <person name="Shibata M."/>
            <person name="Shimokawa T."/>
            <person name="Shomura A."/>
            <person name="Song J."/>
            <person name="Takazaki Y."/>
            <person name="Terasawa K."/>
            <person name="Tsuji K."/>
            <person name="Waki K."/>
            <person name="Yamagata H."/>
            <person name="Yamane H."/>
            <person name="Yoshiki S."/>
            <person name="Yoshihara R."/>
            <person name="Yukawa K."/>
            <person name="Zhong H."/>
            <person name="Iwama H."/>
            <person name="Endo T."/>
            <person name="Ito H."/>
            <person name="Hahn J.H."/>
            <person name="Kim H.-I."/>
            <person name="Eun M.-Y."/>
            <person name="Yano M."/>
            <person name="Jiang J."/>
            <person name="Gojobori T."/>
        </authorList>
    </citation>
    <scope>NUCLEOTIDE SEQUENCE [LARGE SCALE GENOMIC DNA] (OS01G0790900)</scope>
    <source>
        <strain>cv. Nipponbare</strain>
    </source>
</reference>
<reference key="6">
    <citation type="journal article" date="2005" name="Nature">
        <title>The map-based sequence of the rice genome.</title>
        <authorList>
            <consortium name="International rice genome sequencing project (IRGSP)"/>
        </authorList>
    </citation>
    <scope>NUCLEOTIDE SEQUENCE [LARGE SCALE GENOMIC DNA] (OS06G0120500)</scope>
    <source>
        <strain>cv. Nipponbare</strain>
    </source>
</reference>
<reference key="7">
    <citation type="journal article" date="2008" name="Nucleic Acids Res.">
        <title>The rice annotation project database (RAP-DB): 2008 update.</title>
        <authorList>
            <consortium name="The rice annotation project (RAP)"/>
        </authorList>
    </citation>
    <scope>GENOME REANNOTATION</scope>
    <source>
        <strain>cv. Nipponbare</strain>
    </source>
</reference>
<keyword id="KW-0066">ATP synthesis</keyword>
<keyword id="KW-0139">CF(1)</keyword>
<keyword id="KW-0150">Chloroplast</keyword>
<keyword id="KW-0375">Hydrogen ion transport</keyword>
<keyword id="KW-0406">Ion transport</keyword>
<keyword id="KW-0472">Membrane</keyword>
<keyword id="KW-0934">Plastid</keyword>
<keyword id="KW-1185">Reference proteome</keyword>
<keyword id="KW-0793">Thylakoid</keyword>
<keyword id="KW-0813">Transport</keyword>